<reference key="1">
    <citation type="journal article" date="2005" name="Genome Res.">
        <title>The Chlamydophila abortus genome sequence reveals an array of variable proteins that contribute to interspecies variation.</title>
        <authorList>
            <person name="Thomson N.R."/>
            <person name="Yeats C."/>
            <person name="Bell K."/>
            <person name="Holden M.T.G."/>
            <person name="Bentley S.D."/>
            <person name="Livingstone M."/>
            <person name="Cerdeno-Tarraga A.-M."/>
            <person name="Harris B."/>
            <person name="Doggett J."/>
            <person name="Ormond D."/>
            <person name="Mungall K."/>
            <person name="Clarke K."/>
            <person name="Feltwell T."/>
            <person name="Hance Z."/>
            <person name="Sanders M."/>
            <person name="Quail M.A."/>
            <person name="Price C."/>
            <person name="Barrell B.G."/>
            <person name="Parkhill J."/>
            <person name="Longbottom D."/>
        </authorList>
    </citation>
    <scope>NUCLEOTIDE SEQUENCE [LARGE SCALE GENOMIC DNA]</scope>
    <source>
        <strain>DSM 27085 / S26/3</strain>
    </source>
</reference>
<name>RS13_CHLAB</name>
<evidence type="ECO:0000255" key="1">
    <source>
        <dbReference type="HAMAP-Rule" id="MF_01315"/>
    </source>
</evidence>
<evidence type="ECO:0000256" key="2">
    <source>
        <dbReference type="SAM" id="MobiDB-lite"/>
    </source>
</evidence>
<evidence type="ECO:0000305" key="3"/>
<organism>
    <name type="scientific">Chlamydia abortus (strain DSM 27085 / S26/3)</name>
    <name type="common">Chlamydophila abortus</name>
    <dbReference type="NCBI Taxonomy" id="218497"/>
    <lineage>
        <taxon>Bacteria</taxon>
        <taxon>Pseudomonadati</taxon>
        <taxon>Chlamydiota</taxon>
        <taxon>Chlamydiia</taxon>
        <taxon>Chlamydiales</taxon>
        <taxon>Chlamydiaceae</taxon>
        <taxon>Chlamydia/Chlamydophila group</taxon>
        <taxon>Chlamydia</taxon>
    </lineage>
</organism>
<gene>
    <name evidence="1" type="primary">rpsM</name>
    <name type="ordered locus">CAB111</name>
</gene>
<protein>
    <recommendedName>
        <fullName evidence="1">Small ribosomal subunit protein uS13</fullName>
    </recommendedName>
    <alternativeName>
        <fullName evidence="3">30S ribosomal protein S13</fullName>
    </alternativeName>
</protein>
<comment type="function">
    <text evidence="1">Located at the top of the head of the 30S subunit, it contacts several helices of the 16S rRNA. In the 70S ribosome it contacts the 23S rRNA (bridge B1a) and protein L5 of the 50S subunit (bridge B1b), connecting the 2 subunits; these bridges are implicated in subunit movement. Contacts the tRNAs in the A and P-sites.</text>
</comment>
<comment type="subunit">
    <text evidence="1">Part of the 30S ribosomal subunit. Forms a loose heterodimer with protein S19. Forms two bridges to the 50S subunit in the 70S ribosome.</text>
</comment>
<comment type="similarity">
    <text evidence="1">Belongs to the universal ribosomal protein uS13 family.</text>
</comment>
<accession>Q5L701</accession>
<dbReference type="EMBL" id="CR848038">
    <property type="protein sequence ID" value="CAH63569.1"/>
    <property type="molecule type" value="Genomic_DNA"/>
</dbReference>
<dbReference type="RefSeq" id="WP_006342787.1">
    <property type="nucleotide sequence ID" value="NC_004552.2"/>
</dbReference>
<dbReference type="SMR" id="Q5L701"/>
<dbReference type="GeneID" id="93024658"/>
<dbReference type="KEGG" id="cab:CAB111"/>
<dbReference type="eggNOG" id="COG0099">
    <property type="taxonomic scope" value="Bacteria"/>
</dbReference>
<dbReference type="HOGENOM" id="CLU_103849_1_2_0"/>
<dbReference type="OrthoDB" id="9803610at2"/>
<dbReference type="Proteomes" id="UP000001012">
    <property type="component" value="Chromosome"/>
</dbReference>
<dbReference type="GO" id="GO:0005829">
    <property type="term" value="C:cytosol"/>
    <property type="evidence" value="ECO:0007669"/>
    <property type="project" value="TreeGrafter"/>
</dbReference>
<dbReference type="GO" id="GO:0015935">
    <property type="term" value="C:small ribosomal subunit"/>
    <property type="evidence" value="ECO:0007669"/>
    <property type="project" value="TreeGrafter"/>
</dbReference>
<dbReference type="GO" id="GO:0019843">
    <property type="term" value="F:rRNA binding"/>
    <property type="evidence" value="ECO:0007669"/>
    <property type="project" value="UniProtKB-UniRule"/>
</dbReference>
<dbReference type="GO" id="GO:0003735">
    <property type="term" value="F:structural constituent of ribosome"/>
    <property type="evidence" value="ECO:0007669"/>
    <property type="project" value="InterPro"/>
</dbReference>
<dbReference type="GO" id="GO:0000049">
    <property type="term" value="F:tRNA binding"/>
    <property type="evidence" value="ECO:0007669"/>
    <property type="project" value="UniProtKB-UniRule"/>
</dbReference>
<dbReference type="GO" id="GO:0006412">
    <property type="term" value="P:translation"/>
    <property type="evidence" value="ECO:0007669"/>
    <property type="project" value="UniProtKB-UniRule"/>
</dbReference>
<dbReference type="FunFam" id="1.10.8.50:FF:000001">
    <property type="entry name" value="30S ribosomal protein S13"/>
    <property type="match status" value="1"/>
</dbReference>
<dbReference type="FunFam" id="4.10.910.10:FF:000001">
    <property type="entry name" value="30S ribosomal protein S13"/>
    <property type="match status" value="1"/>
</dbReference>
<dbReference type="Gene3D" id="1.10.8.50">
    <property type="match status" value="1"/>
</dbReference>
<dbReference type="Gene3D" id="4.10.910.10">
    <property type="entry name" value="30s ribosomal protein s13, domain 2"/>
    <property type="match status" value="1"/>
</dbReference>
<dbReference type="HAMAP" id="MF_01315">
    <property type="entry name" value="Ribosomal_uS13"/>
    <property type="match status" value="1"/>
</dbReference>
<dbReference type="InterPro" id="IPR027437">
    <property type="entry name" value="Rbsml_uS13_C"/>
</dbReference>
<dbReference type="InterPro" id="IPR001892">
    <property type="entry name" value="Ribosomal_uS13"/>
</dbReference>
<dbReference type="InterPro" id="IPR010979">
    <property type="entry name" value="Ribosomal_uS13-like_H2TH"/>
</dbReference>
<dbReference type="InterPro" id="IPR019980">
    <property type="entry name" value="Ribosomal_uS13_bac-type"/>
</dbReference>
<dbReference type="InterPro" id="IPR018269">
    <property type="entry name" value="Ribosomal_uS13_CS"/>
</dbReference>
<dbReference type="NCBIfam" id="TIGR03631">
    <property type="entry name" value="uS13_bact"/>
    <property type="match status" value="1"/>
</dbReference>
<dbReference type="PANTHER" id="PTHR10871">
    <property type="entry name" value="30S RIBOSOMAL PROTEIN S13/40S RIBOSOMAL PROTEIN S18"/>
    <property type="match status" value="1"/>
</dbReference>
<dbReference type="PANTHER" id="PTHR10871:SF1">
    <property type="entry name" value="SMALL RIBOSOMAL SUBUNIT PROTEIN US13M"/>
    <property type="match status" value="1"/>
</dbReference>
<dbReference type="Pfam" id="PF00416">
    <property type="entry name" value="Ribosomal_S13"/>
    <property type="match status" value="1"/>
</dbReference>
<dbReference type="PIRSF" id="PIRSF002134">
    <property type="entry name" value="Ribosomal_S13"/>
    <property type="match status" value="1"/>
</dbReference>
<dbReference type="SUPFAM" id="SSF46946">
    <property type="entry name" value="S13-like H2TH domain"/>
    <property type="match status" value="1"/>
</dbReference>
<dbReference type="PROSITE" id="PS00646">
    <property type="entry name" value="RIBOSOMAL_S13_1"/>
    <property type="match status" value="1"/>
</dbReference>
<dbReference type="PROSITE" id="PS50159">
    <property type="entry name" value="RIBOSOMAL_S13_2"/>
    <property type="match status" value="1"/>
</dbReference>
<proteinExistence type="inferred from homology"/>
<sequence length="122" mass="13870">MPRIIGIDIPAKKKLKISLTYIYGIGPALSEEIIAKLQLNPEARAAELTEEEIGRLNSLLQSDYVVEGDLRRRVQSDIKRLISIHAYRGQRHRLSLPVRGQRTKTNSRTRKGKRKTVAGKKK</sequence>
<keyword id="KW-0687">Ribonucleoprotein</keyword>
<keyword id="KW-0689">Ribosomal protein</keyword>
<keyword id="KW-0694">RNA-binding</keyword>
<keyword id="KW-0699">rRNA-binding</keyword>
<keyword id="KW-0820">tRNA-binding</keyword>
<feature type="chain" id="PRO_0000230491" description="Small ribosomal subunit protein uS13">
    <location>
        <begin position="1"/>
        <end position="122"/>
    </location>
</feature>
<feature type="region of interest" description="Disordered" evidence="2">
    <location>
        <begin position="93"/>
        <end position="122"/>
    </location>
</feature>
<feature type="compositionally biased region" description="Basic residues" evidence="2">
    <location>
        <begin position="101"/>
        <end position="122"/>
    </location>
</feature>